<protein>
    <recommendedName>
        <fullName>Probable short-chain type dehydrogenase/reductase blr2146</fullName>
        <ecNumber>1.-.-.-</ecNumber>
    </recommendedName>
</protein>
<accession>Q45219</accession>
<reference key="1">
    <citation type="journal article" date="1993" name="Appl. Environ. Microbiol.">
        <title>Cloning and mutagenesis of a cytochrome P-450 locus from Bradyrhizobium japonicum that is expressed anaerobically and symbiotically.</title>
        <authorList>
            <person name="Tully R.E."/>
            <person name="Keister D.L."/>
        </authorList>
    </citation>
    <scope>NUCLEOTIDE SEQUENCE [GENOMIC DNA]</scope>
    <source>
        <strain>JCM 10833 / BCRC 13528 / IAM 13628 / NBRC 14792 / USDA 110</strain>
    </source>
</reference>
<reference key="2">
    <citation type="journal article" date="1998" name="Biochim. Biophys. Acta">
        <title>Identification and sequencing of a cytochrome P450 gene cluster from Bradyrhizobium japonicum.</title>
        <authorList>
            <person name="Tully R.E."/>
            <person name="van Berkum P."/>
            <person name="Lovins K.W."/>
            <person name="Keister D.L."/>
        </authorList>
    </citation>
    <scope>NUCLEOTIDE SEQUENCE [GENOMIC DNA]</scope>
    <source>
        <strain>JCM 10833 / BCRC 13528 / IAM 13628 / NBRC 14792 / USDA 110</strain>
    </source>
</reference>
<reference key="3">
    <citation type="journal article" date="2002" name="DNA Res.">
        <title>Complete genomic sequence of nitrogen-fixing symbiotic bacterium Bradyrhizobium japonicum USDA110.</title>
        <authorList>
            <person name="Kaneko T."/>
            <person name="Nakamura Y."/>
            <person name="Sato S."/>
            <person name="Minamisawa K."/>
            <person name="Uchiumi T."/>
            <person name="Sasamoto S."/>
            <person name="Watanabe A."/>
            <person name="Idesawa K."/>
            <person name="Iriguchi M."/>
            <person name="Kawashima K."/>
            <person name="Kohara M."/>
            <person name="Matsumoto M."/>
            <person name="Shimpo S."/>
            <person name="Tsuruoka H."/>
            <person name="Wada T."/>
            <person name="Yamada M."/>
            <person name="Tabata S."/>
        </authorList>
    </citation>
    <scope>NUCLEOTIDE SEQUENCE [LARGE SCALE GENOMIC DNA]</scope>
    <source>
        <strain>JCM 10833 / BCRC 13528 / IAM 13628 / NBRC 14792 / USDA 110</strain>
    </source>
</reference>
<evidence type="ECO:0000250" key="1"/>
<evidence type="ECO:0000255" key="2">
    <source>
        <dbReference type="PROSITE-ProRule" id="PRU10001"/>
    </source>
</evidence>
<evidence type="ECO:0000256" key="3">
    <source>
        <dbReference type="SAM" id="MobiDB-lite"/>
    </source>
</evidence>
<evidence type="ECO:0000305" key="4"/>
<sequence length="281" mass="28917">MGRFEGKVAVVTGAGAGIGKACALAIAREGGRVVVADIDGSAAIACTAQIAAEAGHALALAIDIADAQAVAALFETAERHFGGVDLLVNNASAMHLTPRDRAILELELAVWDQTMATNLRGTLLCCRQAIPRMIARGGGAIVNMSSCQGLSGDTALTSYAASKAAMNMLSSSLATQYGHAQIRCNAVAPGLIMTERLLAKLDACMQTHLRRHQLLPRVGRPEDVAALVAFLLSDDAAFITGQVVCIDGGMLAHVPTYADGGNSRAARPAGETAEADAAPRC</sequence>
<gene>
    <name type="ordered locus">blr2146</name>
</gene>
<name>Y2146_BRADU</name>
<dbReference type="EC" id="1.-.-.-"/>
<dbReference type="EMBL" id="U12678">
    <property type="protein sequence ID" value="AAC28892.1"/>
    <property type="molecule type" value="Genomic_DNA"/>
</dbReference>
<dbReference type="EMBL" id="BA000040">
    <property type="protein sequence ID" value="BAC47411.1"/>
    <property type="molecule type" value="Genomic_DNA"/>
</dbReference>
<dbReference type="PIR" id="I40211">
    <property type="entry name" value="I40211"/>
</dbReference>
<dbReference type="RefSeq" id="NP_768786.1">
    <property type="nucleotide sequence ID" value="NC_004463.1"/>
</dbReference>
<dbReference type="RefSeq" id="WP_011084940.1">
    <property type="nucleotide sequence ID" value="NZ_CP011360.1"/>
</dbReference>
<dbReference type="SMR" id="Q45219"/>
<dbReference type="STRING" id="224911.AAV28_07575"/>
<dbReference type="EnsemblBacteria" id="BAC47411">
    <property type="protein sequence ID" value="BAC47411"/>
    <property type="gene ID" value="BAC47411"/>
</dbReference>
<dbReference type="KEGG" id="bja:blr2146"/>
<dbReference type="PATRIC" id="fig|224911.44.peg.1662"/>
<dbReference type="eggNOG" id="COG1028">
    <property type="taxonomic scope" value="Bacteria"/>
</dbReference>
<dbReference type="HOGENOM" id="CLU_010194_1_0_5"/>
<dbReference type="InParanoid" id="Q45219"/>
<dbReference type="OrthoDB" id="7064009at2"/>
<dbReference type="PhylomeDB" id="Q45219"/>
<dbReference type="Proteomes" id="UP000002526">
    <property type="component" value="Chromosome"/>
</dbReference>
<dbReference type="GO" id="GO:0016491">
    <property type="term" value="F:oxidoreductase activity"/>
    <property type="evidence" value="ECO:0007669"/>
    <property type="project" value="UniProtKB-KW"/>
</dbReference>
<dbReference type="CDD" id="cd08944">
    <property type="entry name" value="SDR_c12"/>
    <property type="match status" value="1"/>
</dbReference>
<dbReference type="FunFam" id="3.40.50.720:FF:000084">
    <property type="entry name" value="Short-chain dehydrogenase reductase"/>
    <property type="match status" value="1"/>
</dbReference>
<dbReference type="Gene3D" id="3.40.50.720">
    <property type="entry name" value="NAD(P)-binding Rossmann-like Domain"/>
    <property type="match status" value="1"/>
</dbReference>
<dbReference type="InterPro" id="IPR036291">
    <property type="entry name" value="NAD(P)-bd_dom_sf"/>
</dbReference>
<dbReference type="InterPro" id="IPR020904">
    <property type="entry name" value="Sc_DH/Rdtase_CS"/>
</dbReference>
<dbReference type="InterPro" id="IPR002347">
    <property type="entry name" value="SDR_fam"/>
</dbReference>
<dbReference type="NCBIfam" id="NF005559">
    <property type="entry name" value="PRK07231.1"/>
    <property type="match status" value="1"/>
</dbReference>
<dbReference type="PANTHER" id="PTHR24321">
    <property type="entry name" value="DEHYDROGENASES, SHORT CHAIN"/>
    <property type="match status" value="1"/>
</dbReference>
<dbReference type="PANTHER" id="PTHR24321:SF14">
    <property type="entry name" value="SHORT-CHAIN TYPE DEHYDROGENASE_REDUCTASE BLR2146-RELATED"/>
    <property type="match status" value="1"/>
</dbReference>
<dbReference type="Pfam" id="PF13561">
    <property type="entry name" value="adh_short_C2"/>
    <property type="match status" value="1"/>
</dbReference>
<dbReference type="PRINTS" id="PR00081">
    <property type="entry name" value="GDHRDH"/>
</dbReference>
<dbReference type="PRINTS" id="PR00080">
    <property type="entry name" value="SDRFAMILY"/>
</dbReference>
<dbReference type="SUPFAM" id="SSF51735">
    <property type="entry name" value="NAD(P)-binding Rossmann-fold domains"/>
    <property type="match status" value="1"/>
</dbReference>
<dbReference type="PROSITE" id="PS00061">
    <property type="entry name" value="ADH_SHORT"/>
    <property type="match status" value="1"/>
</dbReference>
<feature type="chain" id="PRO_0000054821" description="Probable short-chain type dehydrogenase/reductase blr2146">
    <location>
        <begin position="1"/>
        <end position="281"/>
    </location>
</feature>
<feature type="region of interest" description="Disordered" evidence="3">
    <location>
        <begin position="261"/>
        <end position="281"/>
    </location>
</feature>
<feature type="active site" description="Proton acceptor" evidence="2">
    <location>
        <position position="159"/>
    </location>
</feature>
<feature type="binding site" evidence="1">
    <location>
        <begin position="10"/>
        <end position="34"/>
    </location>
    <ligand>
        <name>NAD(+)</name>
        <dbReference type="ChEBI" id="CHEBI:57540"/>
    </ligand>
</feature>
<feature type="binding site" evidence="1">
    <location>
        <position position="146"/>
    </location>
    <ligand>
        <name>substrate</name>
    </ligand>
</feature>
<feature type="sequence conflict" description="In Ref. 1 and 2." evidence="4" ref="1 2">
    <original>T</original>
    <variation>R</variation>
    <location>
        <position position="117"/>
    </location>
</feature>
<feature type="sequence conflict" description="In Ref. 1 and 2." evidence="4" ref="1 2">
    <original>LAKLDAC</original>
    <variation>R</variation>
    <location>
        <begin position="198"/>
        <end position="204"/>
    </location>
</feature>
<feature type="sequence conflict" description="In Ref. 1 and 2." evidence="4" ref="1 2">
    <original>EDVAALVAFLLSDDAAFI</original>
    <variation>RTWPRWWRSCSPTMLRSS</variation>
    <location>
        <begin position="222"/>
        <end position="239"/>
    </location>
</feature>
<proteinExistence type="inferred from homology"/>
<keyword id="KW-0560">Oxidoreductase</keyword>
<keyword id="KW-1185">Reference proteome</keyword>
<comment type="similarity">
    <text evidence="4">Belongs to the short-chain dehydrogenases/reductases (SDR) family.</text>
</comment>
<organism>
    <name type="scientific">Bradyrhizobium diazoefficiens (strain JCM 10833 / BCRC 13528 / IAM 13628 / NBRC 14792 / USDA 110)</name>
    <dbReference type="NCBI Taxonomy" id="224911"/>
    <lineage>
        <taxon>Bacteria</taxon>
        <taxon>Pseudomonadati</taxon>
        <taxon>Pseudomonadota</taxon>
        <taxon>Alphaproteobacteria</taxon>
        <taxon>Hyphomicrobiales</taxon>
        <taxon>Nitrobacteraceae</taxon>
        <taxon>Bradyrhizobium</taxon>
    </lineage>
</organism>